<evidence type="ECO:0000255" key="1">
    <source>
        <dbReference type="HAMAP-Rule" id="MF_00199"/>
    </source>
</evidence>
<sequence>MATYFVGDIQGCLDELLLLLDQVSFDKEKDQLWLTGDLVARGPKSLETLRFVKSLDKAAVTILGNHDLHLLAVSQGISRIKEKDKTASIFTAPDSEELLTWLRHQPLLATHAQHNIVMTHAGISPQWNIETATECAREIESVLVSDKWVWLLENMYENQPDLWQSDLTGINRYRYIINAFTRMRFCYPDGRLDMECKQPPQELSSDDKEKLIPWFDLKSRCPLSHTVIFGHWAALMGYENNGVIALDTGCVWGEYMTMYRVDDGQYFTQKAIS</sequence>
<feature type="chain" id="PRO_1000099315" description="Bis(5'-nucleosyl)-tetraphosphatase, symmetrical">
    <location>
        <begin position="1"/>
        <end position="273"/>
    </location>
</feature>
<dbReference type="EC" id="3.6.1.41" evidence="1"/>
<dbReference type="EMBL" id="FM178379">
    <property type="protein sequence ID" value="CAQ78052.1"/>
    <property type="molecule type" value="Genomic_DNA"/>
</dbReference>
<dbReference type="RefSeq" id="WP_012549194.1">
    <property type="nucleotide sequence ID" value="NC_011312.1"/>
</dbReference>
<dbReference type="SMR" id="B6EL47"/>
<dbReference type="KEGG" id="vsa:VSAL_I0367"/>
<dbReference type="eggNOG" id="COG0639">
    <property type="taxonomic scope" value="Bacteria"/>
</dbReference>
<dbReference type="HOGENOM" id="CLU_056184_2_0_6"/>
<dbReference type="Proteomes" id="UP000001730">
    <property type="component" value="Chromosome 1"/>
</dbReference>
<dbReference type="GO" id="GO:0008803">
    <property type="term" value="F:bis(5'-nucleosyl)-tetraphosphatase (symmetrical) activity"/>
    <property type="evidence" value="ECO:0007669"/>
    <property type="project" value="UniProtKB-UniRule"/>
</dbReference>
<dbReference type="CDD" id="cd07422">
    <property type="entry name" value="MPP_ApaH"/>
    <property type="match status" value="1"/>
</dbReference>
<dbReference type="Gene3D" id="3.60.21.10">
    <property type="match status" value="1"/>
</dbReference>
<dbReference type="HAMAP" id="MF_00199">
    <property type="entry name" value="ApaH"/>
    <property type="match status" value="1"/>
</dbReference>
<dbReference type="InterPro" id="IPR004617">
    <property type="entry name" value="ApaH"/>
</dbReference>
<dbReference type="InterPro" id="IPR004843">
    <property type="entry name" value="Calcineurin-like_PHP_ApaH"/>
</dbReference>
<dbReference type="InterPro" id="IPR029052">
    <property type="entry name" value="Metallo-depent_PP-like"/>
</dbReference>
<dbReference type="NCBIfam" id="TIGR00668">
    <property type="entry name" value="apaH"/>
    <property type="match status" value="1"/>
</dbReference>
<dbReference type="NCBIfam" id="NF001204">
    <property type="entry name" value="PRK00166.1"/>
    <property type="match status" value="1"/>
</dbReference>
<dbReference type="PANTHER" id="PTHR40942">
    <property type="match status" value="1"/>
</dbReference>
<dbReference type="PANTHER" id="PTHR40942:SF4">
    <property type="entry name" value="CYTOCHROME C5"/>
    <property type="match status" value="1"/>
</dbReference>
<dbReference type="Pfam" id="PF00149">
    <property type="entry name" value="Metallophos"/>
    <property type="match status" value="1"/>
</dbReference>
<dbReference type="PIRSF" id="PIRSF000903">
    <property type="entry name" value="B5n-ttraPtase_sm"/>
    <property type="match status" value="1"/>
</dbReference>
<dbReference type="SUPFAM" id="SSF56300">
    <property type="entry name" value="Metallo-dependent phosphatases"/>
    <property type="match status" value="1"/>
</dbReference>
<protein>
    <recommendedName>
        <fullName evidence="1">Bis(5'-nucleosyl)-tetraphosphatase, symmetrical</fullName>
        <ecNumber evidence="1">3.6.1.41</ecNumber>
    </recommendedName>
    <alternativeName>
        <fullName evidence="1">Ap4A hydrolase</fullName>
    </alternativeName>
    <alternativeName>
        <fullName evidence="1">Diadenosine 5',5'''-P1,P4-tetraphosphate pyrophosphohydrolase</fullName>
    </alternativeName>
    <alternativeName>
        <fullName evidence="1">Diadenosine tetraphosphatase</fullName>
    </alternativeName>
</protein>
<accession>B6EL47</accession>
<name>APAH_ALISL</name>
<reference key="1">
    <citation type="journal article" date="2008" name="BMC Genomics">
        <title>The genome sequence of the fish pathogen Aliivibrio salmonicida strain LFI1238 shows extensive evidence of gene decay.</title>
        <authorList>
            <person name="Hjerde E."/>
            <person name="Lorentzen M.S."/>
            <person name="Holden M.T."/>
            <person name="Seeger K."/>
            <person name="Paulsen S."/>
            <person name="Bason N."/>
            <person name="Churcher C."/>
            <person name="Harris D."/>
            <person name="Norbertczak H."/>
            <person name="Quail M.A."/>
            <person name="Sanders S."/>
            <person name="Thurston S."/>
            <person name="Parkhill J."/>
            <person name="Willassen N.P."/>
            <person name="Thomson N.R."/>
        </authorList>
    </citation>
    <scope>NUCLEOTIDE SEQUENCE [LARGE SCALE GENOMIC DNA]</scope>
    <source>
        <strain>LFI1238</strain>
    </source>
</reference>
<organism>
    <name type="scientific">Aliivibrio salmonicida (strain LFI1238)</name>
    <name type="common">Vibrio salmonicida (strain LFI1238)</name>
    <dbReference type="NCBI Taxonomy" id="316275"/>
    <lineage>
        <taxon>Bacteria</taxon>
        <taxon>Pseudomonadati</taxon>
        <taxon>Pseudomonadota</taxon>
        <taxon>Gammaproteobacteria</taxon>
        <taxon>Vibrionales</taxon>
        <taxon>Vibrionaceae</taxon>
        <taxon>Aliivibrio</taxon>
    </lineage>
</organism>
<gene>
    <name evidence="1" type="primary">apaH</name>
    <name type="ordered locus">VSAL_I0367</name>
</gene>
<proteinExistence type="inferred from homology"/>
<comment type="function">
    <text evidence="1">Hydrolyzes diadenosine 5',5'''-P1,P4-tetraphosphate to yield ADP.</text>
</comment>
<comment type="catalytic activity">
    <reaction evidence="1">
        <text>P(1),P(4)-bis(5'-adenosyl) tetraphosphate + H2O = 2 ADP + 2 H(+)</text>
        <dbReference type="Rhea" id="RHEA:24252"/>
        <dbReference type="ChEBI" id="CHEBI:15377"/>
        <dbReference type="ChEBI" id="CHEBI:15378"/>
        <dbReference type="ChEBI" id="CHEBI:58141"/>
        <dbReference type="ChEBI" id="CHEBI:456216"/>
        <dbReference type="EC" id="3.6.1.41"/>
    </reaction>
</comment>
<comment type="similarity">
    <text evidence="1">Belongs to the Ap4A hydrolase family.</text>
</comment>
<keyword id="KW-0378">Hydrolase</keyword>